<dbReference type="EC" id="2.7.2.11" evidence="1"/>
<dbReference type="EMBL" id="BX640437">
    <property type="protein sequence ID" value="CAE30809.1"/>
    <property type="molecule type" value="Genomic_DNA"/>
</dbReference>
<dbReference type="RefSeq" id="WP_003807457.1">
    <property type="nucleotide sequence ID" value="NC_002927.3"/>
</dbReference>
<dbReference type="SMR" id="Q7WQL9"/>
<dbReference type="GeneID" id="69600699"/>
<dbReference type="KEGG" id="bbr:BB0311"/>
<dbReference type="eggNOG" id="COG0263">
    <property type="taxonomic scope" value="Bacteria"/>
</dbReference>
<dbReference type="HOGENOM" id="CLU_025400_2_0_4"/>
<dbReference type="UniPathway" id="UPA00098">
    <property type="reaction ID" value="UER00359"/>
</dbReference>
<dbReference type="Proteomes" id="UP000001027">
    <property type="component" value="Chromosome"/>
</dbReference>
<dbReference type="GO" id="GO:0005829">
    <property type="term" value="C:cytosol"/>
    <property type="evidence" value="ECO:0007669"/>
    <property type="project" value="TreeGrafter"/>
</dbReference>
<dbReference type="GO" id="GO:0005524">
    <property type="term" value="F:ATP binding"/>
    <property type="evidence" value="ECO:0007669"/>
    <property type="project" value="UniProtKB-KW"/>
</dbReference>
<dbReference type="GO" id="GO:0004349">
    <property type="term" value="F:glutamate 5-kinase activity"/>
    <property type="evidence" value="ECO:0007669"/>
    <property type="project" value="UniProtKB-UniRule"/>
</dbReference>
<dbReference type="GO" id="GO:0003723">
    <property type="term" value="F:RNA binding"/>
    <property type="evidence" value="ECO:0007669"/>
    <property type="project" value="InterPro"/>
</dbReference>
<dbReference type="GO" id="GO:0055129">
    <property type="term" value="P:L-proline biosynthetic process"/>
    <property type="evidence" value="ECO:0007669"/>
    <property type="project" value="UniProtKB-UniRule"/>
</dbReference>
<dbReference type="CDD" id="cd04242">
    <property type="entry name" value="AAK_G5K_ProB"/>
    <property type="match status" value="1"/>
</dbReference>
<dbReference type="CDD" id="cd21157">
    <property type="entry name" value="PUA_G5K"/>
    <property type="match status" value="1"/>
</dbReference>
<dbReference type="FunFam" id="2.30.130.10:FF:000007">
    <property type="entry name" value="Glutamate 5-kinase"/>
    <property type="match status" value="1"/>
</dbReference>
<dbReference type="FunFam" id="3.40.1160.10:FF:000018">
    <property type="entry name" value="Glutamate 5-kinase"/>
    <property type="match status" value="1"/>
</dbReference>
<dbReference type="Gene3D" id="3.40.1160.10">
    <property type="entry name" value="Acetylglutamate kinase-like"/>
    <property type="match status" value="1"/>
</dbReference>
<dbReference type="Gene3D" id="2.30.130.10">
    <property type="entry name" value="PUA domain"/>
    <property type="match status" value="1"/>
</dbReference>
<dbReference type="HAMAP" id="MF_00456">
    <property type="entry name" value="ProB"/>
    <property type="match status" value="1"/>
</dbReference>
<dbReference type="InterPro" id="IPR036393">
    <property type="entry name" value="AceGlu_kinase-like_sf"/>
</dbReference>
<dbReference type="InterPro" id="IPR001048">
    <property type="entry name" value="Asp/Glu/Uridylate_kinase"/>
</dbReference>
<dbReference type="InterPro" id="IPR041739">
    <property type="entry name" value="G5K_ProB"/>
</dbReference>
<dbReference type="InterPro" id="IPR001057">
    <property type="entry name" value="Glu/AcGlu_kinase"/>
</dbReference>
<dbReference type="InterPro" id="IPR011529">
    <property type="entry name" value="Glu_5kinase"/>
</dbReference>
<dbReference type="InterPro" id="IPR005715">
    <property type="entry name" value="Glu_5kinase/COase_Synthase"/>
</dbReference>
<dbReference type="InterPro" id="IPR019797">
    <property type="entry name" value="Glutamate_5-kinase_CS"/>
</dbReference>
<dbReference type="InterPro" id="IPR002478">
    <property type="entry name" value="PUA"/>
</dbReference>
<dbReference type="InterPro" id="IPR015947">
    <property type="entry name" value="PUA-like_sf"/>
</dbReference>
<dbReference type="InterPro" id="IPR036974">
    <property type="entry name" value="PUA_sf"/>
</dbReference>
<dbReference type="NCBIfam" id="TIGR01027">
    <property type="entry name" value="proB"/>
    <property type="match status" value="1"/>
</dbReference>
<dbReference type="PANTHER" id="PTHR43654">
    <property type="entry name" value="GLUTAMATE 5-KINASE"/>
    <property type="match status" value="1"/>
</dbReference>
<dbReference type="PANTHER" id="PTHR43654:SF1">
    <property type="entry name" value="ISOPENTENYL PHOSPHATE KINASE"/>
    <property type="match status" value="1"/>
</dbReference>
<dbReference type="Pfam" id="PF00696">
    <property type="entry name" value="AA_kinase"/>
    <property type="match status" value="1"/>
</dbReference>
<dbReference type="Pfam" id="PF01472">
    <property type="entry name" value="PUA"/>
    <property type="match status" value="1"/>
</dbReference>
<dbReference type="PIRSF" id="PIRSF000729">
    <property type="entry name" value="GK"/>
    <property type="match status" value="1"/>
</dbReference>
<dbReference type="PRINTS" id="PR00474">
    <property type="entry name" value="GLU5KINASE"/>
</dbReference>
<dbReference type="SMART" id="SM00359">
    <property type="entry name" value="PUA"/>
    <property type="match status" value="1"/>
</dbReference>
<dbReference type="SUPFAM" id="SSF53633">
    <property type="entry name" value="Carbamate kinase-like"/>
    <property type="match status" value="1"/>
</dbReference>
<dbReference type="SUPFAM" id="SSF88697">
    <property type="entry name" value="PUA domain-like"/>
    <property type="match status" value="1"/>
</dbReference>
<dbReference type="PROSITE" id="PS00902">
    <property type="entry name" value="GLUTAMATE_5_KINASE"/>
    <property type="match status" value="1"/>
</dbReference>
<dbReference type="PROSITE" id="PS50890">
    <property type="entry name" value="PUA"/>
    <property type="match status" value="1"/>
</dbReference>
<evidence type="ECO:0000255" key="1">
    <source>
        <dbReference type="HAMAP-Rule" id="MF_00456"/>
    </source>
</evidence>
<protein>
    <recommendedName>
        <fullName evidence="1">Glutamate 5-kinase</fullName>
        <ecNumber evidence="1">2.7.2.11</ecNumber>
    </recommendedName>
    <alternativeName>
        <fullName evidence="1">Gamma-glutamyl kinase</fullName>
        <shortName evidence="1">GK</shortName>
    </alternativeName>
</protein>
<accession>Q7WQL9</accession>
<name>PROB_BORBR</name>
<reference key="1">
    <citation type="journal article" date="2003" name="Nat. Genet.">
        <title>Comparative analysis of the genome sequences of Bordetella pertussis, Bordetella parapertussis and Bordetella bronchiseptica.</title>
        <authorList>
            <person name="Parkhill J."/>
            <person name="Sebaihia M."/>
            <person name="Preston A."/>
            <person name="Murphy L.D."/>
            <person name="Thomson N.R."/>
            <person name="Harris D.E."/>
            <person name="Holden M.T.G."/>
            <person name="Churcher C.M."/>
            <person name="Bentley S.D."/>
            <person name="Mungall K.L."/>
            <person name="Cerdeno-Tarraga A.-M."/>
            <person name="Temple L."/>
            <person name="James K.D."/>
            <person name="Harris B."/>
            <person name="Quail M.A."/>
            <person name="Achtman M."/>
            <person name="Atkin R."/>
            <person name="Baker S."/>
            <person name="Basham D."/>
            <person name="Bason N."/>
            <person name="Cherevach I."/>
            <person name="Chillingworth T."/>
            <person name="Collins M."/>
            <person name="Cronin A."/>
            <person name="Davis P."/>
            <person name="Doggett J."/>
            <person name="Feltwell T."/>
            <person name="Goble A."/>
            <person name="Hamlin N."/>
            <person name="Hauser H."/>
            <person name="Holroyd S."/>
            <person name="Jagels K."/>
            <person name="Leather S."/>
            <person name="Moule S."/>
            <person name="Norberczak H."/>
            <person name="O'Neil S."/>
            <person name="Ormond D."/>
            <person name="Price C."/>
            <person name="Rabbinowitsch E."/>
            <person name="Rutter S."/>
            <person name="Sanders M."/>
            <person name="Saunders D."/>
            <person name="Seeger K."/>
            <person name="Sharp S."/>
            <person name="Simmonds M."/>
            <person name="Skelton J."/>
            <person name="Squares R."/>
            <person name="Squares S."/>
            <person name="Stevens K."/>
            <person name="Unwin L."/>
            <person name="Whitehead S."/>
            <person name="Barrell B.G."/>
            <person name="Maskell D.J."/>
        </authorList>
    </citation>
    <scope>NUCLEOTIDE SEQUENCE [LARGE SCALE GENOMIC DNA]</scope>
    <source>
        <strain>ATCC BAA-588 / NCTC 13252 / RB50</strain>
    </source>
</reference>
<proteinExistence type="inferred from homology"/>
<sequence length="378" mass="40292">MTAQTSAVSVISAANRLVAKVGSSLVTNEGRGLDRAAVGHWAAQIAALHQQGKQVVLVSSGAIAEGMARLGWRKRPSAMHELQAAAAVGQMGLCQAYEAAFAEFGLRTAQILLTHEDLADRHRYLNARSTLFALLRLGVVPIVNENDTVVTDEIRFGDNDTLGALVTNLIEADALIILTDQRGLYEADPRRDPAARFVAHAQAGDAALEAMAGGAGSGVGTGGMLTKILAAKRAAHSGAHTVIASGRERNVLTRLAQGECIGTELRAVLPVWSARKQWLADHLRLRGRVVLDDGAVHALLHEGKSLLPIGVAEVQGEFERGDVVACVDMHGRECARGLINYSSADTRRILRQPSSQIARILGSMTDPELMHRDNLVVT</sequence>
<gene>
    <name evidence="1" type="primary">proB</name>
    <name type="ordered locus">BB0311</name>
</gene>
<feature type="chain" id="PRO_0000109647" description="Glutamate 5-kinase">
    <location>
        <begin position="1"/>
        <end position="378"/>
    </location>
</feature>
<feature type="domain" description="PUA" evidence="1">
    <location>
        <begin position="286"/>
        <end position="364"/>
    </location>
</feature>
<feature type="binding site" evidence="1">
    <location>
        <position position="20"/>
    </location>
    <ligand>
        <name>ATP</name>
        <dbReference type="ChEBI" id="CHEBI:30616"/>
    </ligand>
</feature>
<feature type="binding site" evidence="1">
    <location>
        <position position="60"/>
    </location>
    <ligand>
        <name>substrate</name>
    </ligand>
</feature>
<feature type="binding site" evidence="1">
    <location>
        <position position="147"/>
    </location>
    <ligand>
        <name>substrate</name>
    </ligand>
</feature>
<feature type="binding site" evidence="1">
    <location>
        <position position="159"/>
    </location>
    <ligand>
        <name>substrate</name>
    </ligand>
</feature>
<feature type="binding site" evidence="1">
    <location>
        <begin position="179"/>
        <end position="180"/>
    </location>
    <ligand>
        <name>ATP</name>
        <dbReference type="ChEBI" id="CHEBI:30616"/>
    </ligand>
</feature>
<feature type="binding site" evidence="1">
    <location>
        <begin position="221"/>
        <end position="227"/>
    </location>
    <ligand>
        <name>ATP</name>
        <dbReference type="ChEBI" id="CHEBI:30616"/>
    </ligand>
</feature>
<keyword id="KW-0028">Amino-acid biosynthesis</keyword>
<keyword id="KW-0067">ATP-binding</keyword>
<keyword id="KW-0963">Cytoplasm</keyword>
<keyword id="KW-0418">Kinase</keyword>
<keyword id="KW-0547">Nucleotide-binding</keyword>
<keyword id="KW-0641">Proline biosynthesis</keyword>
<keyword id="KW-0808">Transferase</keyword>
<comment type="function">
    <text evidence="1">Catalyzes the transfer of a phosphate group to glutamate to form L-glutamate 5-phosphate.</text>
</comment>
<comment type="catalytic activity">
    <reaction evidence="1">
        <text>L-glutamate + ATP = L-glutamyl 5-phosphate + ADP</text>
        <dbReference type="Rhea" id="RHEA:14877"/>
        <dbReference type="ChEBI" id="CHEBI:29985"/>
        <dbReference type="ChEBI" id="CHEBI:30616"/>
        <dbReference type="ChEBI" id="CHEBI:58274"/>
        <dbReference type="ChEBI" id="CHEBI:456216"/>
        <dbReference type="EC" id="2.7.2.11"/>
    </reaction>
</comment>
<comment type="pathway">
    <text evidence="1">Amino-acid biosynthesis; L-proline biosynthesis; L-glutamate 5-semialdehyde from L-glutamate: step 1/2.</text>
</comment>
<comment type="subcellular location">
    <subcellularLocation>
        <location evidence="1">Cytoplasm</location>
    </subcellularLocation>
</comment>
<comment type="similarity">
    <text evidence="1">Belongs to the glutamate 5-kinase family.</text>
</comment>
<organism>
    <name type="scientific">Bordetella bronchiseptica (strain ATCC BAA-588 / NCTC 13252 / RB50)</name>
    <name type="common">Alcaligenes bronchisepticus</name>
    <dbReference type="NCBI Taxonomy" id="257310"/>
    <lineage>
        <taxon>Bacteria</taxon>
        <taxon>Pseudomonadati</taxon>
        <taxon>Pseudomonadota</taxon>
        <taxon>Betaproteobacteria</taxon>
        <taxon>Burkholderiales</taxon>
        <taxon>Alcaligenaceae</taxon>
        <taxon>Bordetella</taxon>
    </lineage>
</organism>